<name>CUE1_CANGA</name>
<reference key="1">
    <citation type="journal article" date="2004" name="Nature">
        <title>Genome evolution in yeasts.</title>
        <authorList>
            <person name="Dujon B."/>
            <person name="Sherman D."/>
            <person name="Fischer G."/>
            <person name="Durrens P."/>
            <person name="Casaregola S."/>
            <person name="Lafontaine I."/>
            <person name="de Montigny J."/>
            <person name="Marck C."/>
            <person name="Neuveglise C."/>
            <person name="Talla E."/>
            <person name="Goffard N."/>
            <person name="Frangeul L."/>
            <person name="Aigle M."/>
            <person name="Anthouard V."/>
            <person name="Babour A."/>
            <person name="Barbe V."/>
            <person name="Barnay S."/>
            <person name="Blanchin S."/>
            <person name="Beckerich J.-M."/>
            <person name="Beyne E."/>
            <person name="Bleykasten C."/>
            <person name="Boisrame A."/>
            <person name="Boyer J."/>
            <person name="Cattolico L."/>
            <person name="Confanioleri F."/>
            <person name="de Daruvar A."/>
            <person name="Despons L."/>
            <person name="Fabre E."/>
            <person name="Fairhead C."/>
            <person name="Ferry-Dumazet H."/>
            <person name="Groppi A."/>
            <person name="Hantraye F."/>
            <person name="Hennequin C."/>
            <person name="Jauniaux N."/>
            <person name="Joyet P."/>
            <person name="Kachouri R."/>
            <person name="Kerrest A."/>
            <person name="Koszul R."/>
            <person name="Lemaire M."/>
            <person name="Lesur I."/>
            <person name="Ma L."/>
            <person name="Muller H."/>
            <person name="Nicaud J.-M."/>
            <person name="Nikolski M."/>
            <person name="Oztas S."/>
            <person name="Ozier-Kalogeropoulos O."/>
            <person name="Pellenz S."/>
            <person name="Potier S."/>
            <person name="Richard G.-F."/>
            <person name="Straub M.-L."/>
            <person name="Suleau A."/>
            <person name="Swennen D."/>
            <person name="Tekaia F."/>
            <person name="Wesolowski-Louvel M."/>
            <person name="Westhof E."/>
            <person name="Wirth B."/>
            <person name="Zeniou-Meyer M."/>
            <person name="Zivanovic Y."/>
            <person name="Bolotin-Fukuhara M."/>
            <person name="Thierry A."/>
            <person name="Bouchier C."/>
            <person name="Caudron B."/>
            <person name="Scarpelli C."/>
            <person name="Gaillardin C."/>
            <person name="Weissenbach J."/>
            <person name="Wincker P."/>
            <person name="Souciet J.-L."/>
        </authorList>
    </citation>
    <scope>NUCLEOTIDE SEQUENCE [LARGE SCALE GENOMIC DNA]</scope>
    <source>
        <strain>ATCC 2001 / BCRC 20586 / JCM 3761 / NBRC 0622 / NRRL Y-65 / CBS 138</strain>
    </source>
</reference>
<comment type="function">
    <text evidence="1">Component of the endoplasmic reticulum-associated protein degradation (ERAD) pathway. Recruits the soluble ubiquitin-conjugating enzyme UBC7 to the cytoplasmic face of the endoplasmic reticulum membrane where it functions in degradation of misfolded or regulated proteins localized in the endoplasmic reticulum (ER) lumen or membrane via the ubiquitin-proteasome system. Targets the E2 conjugating enzyme UBC7 to the DOA10 ubiquitin ligase complex, which is part of the ERAD-C pathway responsible for the rapid degradation of membrane proteins with misfolded cytoplasmic domains, and to the HRD1 ubiquitin ligase complex, which is part of the ERAD-L and ERAD-M pathways responsible for the rapid degradation of soluble lumenal and membrane proteins with misfolded lumenal domains (ERAD-L), or ER-membrane proteins with misfolded transmembrane domains (ERAD-M) (By similarity).</text>
</comment>
<comment type="subunit">
    <text evidence="1">Forms a heterodimer with UBC7.</text>
</comment>
<comment type="subcellular location">
    <subcellularLocation>
        <location evidence="1">Endoplasmic reticulum membrane</location>
        <topology evidence="1">Single-pass membrane protein</topology>
    </subcellularLocation>
</comment>
<comment type="similarity">
    <text evidence="5">Belongs to the CUE1 family.</text>
</comment>
<proteinExistence type="inferred from homology"/>
<protein>
    <recommendedName>
        <fullName>Coupling of ubiquitin conjugation to ER degradation protein 1</fullName>
    </recommendedName>
</protein>
<gene>
    <name type="primary">CUE1</name>
    <name type="ordered locus">CAGL0H02321g</name>
</gene>
<keyword id="KW-0256">Endoplasmic reticulum</keyword>
<keyword id="KW-0472">Membrane</keyword>
<keyword id="KW-1185">Reference proteome</keyword>
<keyword id="KW-0812">Transmembrane</keyword>
<keyword id="KW-1133">Transmembrane helix</keyword>
<keyword id="KW-0833">Ubl conjugation pathway</keyword>
<dbReference type="EMBL" id="CR380954">
    <property type="protein sequence ID" value="CAG59829.1"/>
    <property type="molecule type" value="Genomic_DNA"/>
</dbReference>
<dbReference type="RefSeq" id="XP_446896.1">
    <property type="nucleotide sequence ID" value="XM_446896.1"/>
</dbReference>
<dbReference type="SMR" id="Q6FS98"/>
<dbReference type="FunCoup" id="Q6FS98">
    <property type="interactions" value="118"/>
</dbReference>
<dbReference type="STRING" id="284593.Q6FS98"/>
<dbReference type="EnsemblFungi" id="CAGL0H02321g-T">
    <property type="protein sequence ID" value="CAGL0H02321g-T-p1"/>
    <property type="gene ID" value="CAGL0H02321g"/>
</dbReference>
<dbReference type="KEGG" id="cgr:2888868"/>
<dbReference type="CGD" id="CAL0131762">
    <property type="gene designation" value="CAGL0H02321g"/>
</dbReference>
<dbReference type="VEuPathDB" id="FungiDB:B1J91_H02321g"/>
<dbReference type="VEuPathDB" id="FungiDB:CAGL0H02321g"/>
<dbReference type="eggNOG" id="ENOG502S35Z">
    <property type="taxonomic scope" value="Eukaryota"/>
</dbReference>
<dbReference type="HOGENOM" id="CLU_115919_0_0_1"/>
<dbReference type="InParanoid" id="Q6FS98"/>
<dbReference type="OMA" id="TVNRFME"/>
<dbReference type="Proteomes" id="UP000002428">
    <property type="component" value="Chromosome H"/>
</dbReference>
<dbReference type="GO" id="GO:1990389">
    <property type="term" value="C:CUE1-UBC7 ubiquitin-conjugating enzyme complex"/>
    <property type="evidence" value="ECO:0007669"/>
    <property type="project" value="EnsemblFungi"/>
</dbReference>
<dbReference type="GO" id="GO:0000837">
    <property type="term" value="C:Doa10p ubiquitin ligase complex"/>
    <property type="evidence" value="ECO:0007669"/>
    <property type="project" value="EnsemblFungi"/>
</dbReference>
<dbReference type="GO" id="GO:0000839">
    <property type="term" value="C:Hrd1p ubiquitin ligase ERAD-L complex"/>
    <property type="evidence" value="ECO:0007669"/>
    <property type="project" value="EnsemblFungi"/>
</dbReference>
<dbReference type="GO" id="GO:0043130">
    <property type="term" value="F:ubiquitin binding"/>
    <property type="evidence" value="ECO:0007669"/>
    <property type="project" value="EnsemblFungi"/>
</dbReference>
<dbReference type="GO" id="GO:0097027">
    <property type="term" value="F:ubiquitin-protein transferase activator activity"/>
    <property type="evidence" value="ECO:0007669"/>
    <property type="project" value="EnsemblFungi"/>
</dbReference>
<dbReference type="GO" id="GO:0036503">
    <property type="term" value="P:ERAD pathway"/>
    <property type="evidence" value="ECO:0007669"/>
    <property type="project" value="EnsemblFungi"/>
</dbReference>
<dbReference type="GO" id="GO:0097051">
    <property type="term" value="P:establishment of protein localization to endoplasmic reticulum membrane"/>
    <property type="evidence" value="ECO:0007669"/>
    <property type="project" value="EnsemblFungi"/>
</dbReference>
<dbReference type="CDD" id="cd14424">
    <property type="entry name" value="CUE_Cue1p_like"/>
    <property type="match status" value="1"/>
</dbReference>
<dbReference type="Gene3D" id="1.10.287.4310">
    <property type="match status" value="1"/>
</dbReference>
<dbReference type="Gene3D" id="1.10.8.10">
    <property type="entry name" value="DNA helicase RuvA subunit, C-terminal domain"/>
    <property type="match status" value="1"/>
</dbReference>
<dbReference type="InterPro" id="IPR003892">
    <property type="entry name" value="CUE"/>
</dbReference>
<dbReference type="InterPro" id="IPR041158">
    <property type="entry name" value="Cue1_U7BR"/>
</dbReference>
<dbReference type="Pfam" id="PF02845">
    <property type="entry name" value="CUE"/>
    <property type="match status" value="1"/>
</dbReference>
<dbReference type="Pfam" id="PF18499">
    <property type="entry name" value="Cue1_U7BR"/>
    <property type="match status" value="1"/>
</dbReference>
<dbReference type="SMART" id="SM00546">
    <property type="entry name" value="CUE"/>
    <property type="match status" value="1"/>
</dbReference>
<dbReference type="PROSITE" id="PS51140">
    <property type="entry name" value="CUE"/>
    <property type="match status" value="1"/>
</dbReference>
<organism>
    <name type="scientific">Candida glabrata (strain ATCC 2001 / BCRC 20586 / JCM 3761 / NBRC 0622 / NRRL Y-65 / CBS 138)</name>
    <name type="common">Yeast</name>
    <name type="synonym">Nakaseomyces glabratus</name>
    <dbReference type="NCBI Taxonomy" id="284593"/>
    <lineage>
        <taxon>Eukaryota</taxon>
        <taxon>Fungi</taxon>
        <taxon>Dikarya</taxon>
        <taxon>Ascomycota</taxon>
        <taxon>Saccharomycotina</taxon>
        <taxon>Saccharomycetes</taxon>
        <taxon>Saccharomycetales</taxon>
        <taxon>Saccharomycetaceae</taxon>
        <taxon>Nakaseomyces</taxon>
    </lineage>
</organism>
<accession>Q6FS98</accession>
<feature type="chain" id="PRO_0000280671" description="Coupling of ubiquitin conjugation to ER degradation protein 1">
    <location>
        <begin position="1"/>
        <end position="203"/>
    </location>
</feature>
<feature type="topological domain" description="Lumenal" evidence="1">
    <location>
        <begin position="1"/>
        <end position="4"/>
    </location>
</feature>
<feature type="transmembrane region" description="Helical" evidence="2">
    <location>
        <begin position="5"/>
        <end position="25"/>
    </location>
</feature>
<feature type="topological domain" description="Cytoplasmic" evidence="1">
    <location>
        <begin position="26"/>
        <end position="203"/>
    </location>
</feature>
<feature type="domain" description="CUE" evidence="3">
    <location>
        <begin position="70"/>
        <end position="112"/>
    </location>
</feature>
<feature type="region of interest" description="Disordered" evidence="4">
    <location>
        <begin position="29"/>
        <end position="74"/>
    </location>
</feature>
<feature type="region of interest" description="Disordered" evidence="4">
    <location>
        <begin position="123"/>
        <end position="144"/>
    </location>
</feature>
<feature type="compositionally biased region" description="Polar residues" evidence="4">
    <location>
        <begin position="33"/>
        <end position="69"/>
    </location>
</feature>
<feature type="compositionally biased region" description="Polar residues" evidence="4">
    <location>
        <begin position="123"/>
        <end position="132"/>
    </location>
</feature>
<evidence type="ECO:0000250" key="1"/>
<evidence type="ECO:0000255" key="2"/>
<evidence type="ECO:0000255" key="3">
    <source>
        <dbReference type="PROSITE-ProRule" id="PRU00468"/>
    </source>
</evidence>
<evidence type="ECO:0000256" key="4">
    <source>
        <dbReference type="SAM" id="MobiDB-lite"/>
    </source>
</evidence>
<evidence type="ECO:0000305" key="5"/>
<sequence length="203" mass="22968">MEHSAAVVVATLILGIFVVKWFAAPKEHPSAQRLPNTQLPSSSNNQQRTAGSSNGRGSQRRVSSTSRRNITPEMIETVRNVIPALHPEQIRYDLESTGSVEQTMERYFNGESFPFPPGYTPARESSANGQHNNIDEPSDIRKRSNIRPDNLLSKFNVDMSVDMSDMSIKELEIDERKKLLVWEARKNMEKRLETDTELASLIK</sequence>